<protein>
    <recommendedName>
        <fullName evidence="1">Arginine--tRNA ligase</fullName>
        <ecNumber evidence="1">6.1.1.19</ecNumber>
    </recommendedName>
    <alternativeName>
        <fullName evidence="1">Arginyl-tRNA synthetase</fullName>
        <shortName evidence="1">ArgRS</shortName>
    </alternativeName>
</protein>
<evidence type="ECO:0000255" key="1">
    <source>
        <dbReference type="HAMAP-Rule" id="MF_00123"/>
    </source>
</evidence>
<accession>Q17X54</accession>
<sequence length="541" mass="62118">MHTLIKSVLEEILEAEVIIEHPKDREHGHYATPIAFNLAKIFKKSPLVIAEELALKISTHAKTQGFFDSVVACKGYINFTLSLDFLERFTQKALELKEKFGSKFKSENSQKIFLEFVSANPTGPLHIGHARGAVFGDSLAKIARFLGHEVLCEYYVNDMGSQIRLLGLSVWLAYREHVLKEGVTYPEVFYKGEYIIEIAKKAHNDLEPSLFKENEETIIEVLSSYAKDLMLLEIKDNLDSLGIHFDSYASEKEIFKHKDAVFKNLEKANALYEKDSKIWLKSSLYQDESDRVLVKEDKNYTYLAGDIVYHNEKFKQNYTKYINIWGADHHGYIARVKASLKFLGYDSNKLEVLLAQMVGLLKDNEPYKMSKRAGNFILIKDVVDDIGKDALRFIFLSKRLDTHLEFDVNTLKKQDSSNPIYYIHYANSRIHTMLEKSPFSKEEILQTPLKNLNAEEKYLLFSALSLPKIIEASFEEYGLQKMCEYAKTLASEFHRFYNAGKILDTPKTKELLKICLMVSLSLTNAFKLLGIEIKTKISAKD</sequence>
<keyword id="KW-0030">Aminoacyl-tRNA synthetase</keyword>
<keyword id="KW-0067">ATP-binding</keyword>
<keyword id="KW-0963">Cytoplasm</keyword>
<keyword id="KW-0436">Ligase</keyword>
<keyword id="KW-0547">Nucleotide-binding</keyword>
<keyword id="KW-0648">Protein biosynthesis</keyword>
<reference key="1">
    <citation type="journal article" date="2006" name="PLoS Genet.">
        <title>Who ate whom? Adaptive Helicobacter genomic changes that accompanied a host jump from early humans to large felines.</title>
        <authorList>
            <person name="Eppinger M."/>
            <person name="Baar C."/>
            <person name="Linz B."/>
            <person name="Raddatz G."/>
            <person name="Lanz C."/>
            <person name="Keller H."/>
            <person name="Morelli G."/>
            <person name="Gressmann H."/>
            <person name="Achtman M."/>
            <person name="Schuster S.C."/>
        </authorList>
    </citation>
    <scope>NUCLEOTIDE SEQUENCE [LARGE SCALE GENOMIC DNA]</scope>
    <source>
        <strain>Sheeba</strain>
    </source>
</reference>
<organism>
    <name type="scientific">Helicobacter acinonychis (strain Sheeba)</name>
    <dbReference type="NCBI Taxonomy" id="382638"/>
    <lineage>
        <taxon>Bacteria</taxon>
        <taxon>Pseudomonadati</taxon>
        <taxon>Campylobacterota</taxon>
        <taxon>Epsilonproteobacteria</taxon>
        <taxon>Campylobacterales</taxon>
        <taxon>Helicobacteraceae</taxon>
        <taxon>Helicobacter</taxon>
    </lineage>
</organism>
<gene>
    <name evidence="1" type="primary">argS</name>
    <name type="ordered locus">Hac_1002</name>
</gene>
<feature type="chain" id="PRO_1000018040" description="Arginine--tRNA ligase">
    <location>
        <begin position="1"/>
        <end position="541"/>
    </location>
</feature>
<feature type="short sequence motif" description="'HIGH' region">
    <location>
        <begin position="119"/>
        <end position="129"/>
    </location>
</feature>
<dbReference type="EC" id="6.1.1.19" evidence="1"/>
<dbReference type="EMBL" id="AM260522">
    <property type="protein sequence ID" value="CAJ99772.1"/>
    <property type="molecule type" value="Genomic_DNA"/>
</dbReference>
<dbReference type="RefSeq" id="WP_011577882.1">
    <property type="nucleotide sequence ID" value="NC_008229.1"/>
</dbReference>
<dbReference type="SMR" id="Q17X54"/>
<dbReference type="STRING" id="382638.Hac_1002"/>
<dbReference type="GeneID" id="31758384"/>
<dbReference type="KEGG" id="hac:Hac_1002"/>
<dbReference type="eggNOG" id="COG0018">
    <property type="taxonomic scope" value="Bacteria"/>
</dbReference>
<dbReference type="HOGENOM" id="CLU_006406_0_1_7"/>
<dbReference type="OrthoDB" id="9803211at2"/>
<dbReference type="BioCyc" id="HACI382638:HAC_RS04315-MONOMER"/>
<dbReference type="Proteomes" id="UP000000775">
    <property type="component" value="Chromosome"/>
</dbReference>
<dbReference type="GO" id="GO:0005737">
    <property type="term" value="C:cytoplasm"/>
    <property type="evidence" value="ECO:0007669"/>
    <property type="project" value="UniProtKB-SubCell"/>
</dbReference>
<dbReference type="GO" id="GO:0004814">
    <property type="term" value="F:arginine-tRNA ligase activity"/>
    <property type="evidence" value="ECO:0007669"/>
    <property type="project" value="UniProtKB-UniRule"/>
</dbReference>
<dbReference type="GO" id="GO:0005524">
    <property type="term" value="F:ATP binding"/>
    <property type="evidence" value="ECO:0007669"/>
    <property type="project" value="UniProtKB-UniRule"/>
</dbReference>
<dbReference type="GO" id="GO:0006420">
    <property type="term" value="P:arginyl-tRNA aminoacylation"/>
    <property type="evidence" value="ECO:0007669"/>
    <property type="project" value="UniProtKB-UniRule"/>
</dbReference>
<dbReference type="CDD" id="cd00671">
    <property type="entry name" value="ArgRS_core"/>
    <property type="match status" value="1"/>
</dbReference>
<dbReference type="FunFam" id="3.30.1360.70:FF:000008">
    <property type="entry name" value="Arginine--tRNA ligase"/>
    <property type="match status" value="1"/>
</dbReference>
<dbReference type="FunFam" id="3.40.50.620:FF:000062">
    <property type="entry name" value="Arginine--tRNA ligase"/>
    <property type="match status" value="1"/>
</dbReference>
<dbReference type="Gene3D" id="3.30.1360.70">
    <property type="entry name" value="Arginyl tRNA synthetase N-terminal domain"/>
    <property type="match status" value="1"/>
</dbReference>
<dbReference type="Gene3D" id="3.40.50.620">
    <property type="entry name" value="HUPs"/>
    <property type="match status" value="1"/>
</dbReference>
<dbReference type="Gene3D" id="1.10.730.10">
    <property type="entry name" value="Isoleucyl-tRNA Synthetase, Domain 1"/>
    <property type="match status" value="1"/>
</dbReference>
<dbReference type="HAMAP" id="MF_00123">
    <property type="entry name" value="Arg_tRNA_synth"/>
    <property type="match status" value="1"/>
</dbReference>
<dbReference type="InterPro" id="IPR001412">
    <property type="entry name" value="aa-tRNA-synth_I_CS"/>
</dbReference>
<dbReference type="InterPro" id="IPR001278">
    <property type="entry name" value="Arg-tRNA-ligase"/>
</dbReference>
<dbReference type="InterPro" id="IPR005148">
    <property type="entry name" value="Arg-tRNA-synth_N"/>
</dbReference>
<dbReference type="InterPro" id="IPR036695">
    <property type="entry name" value="Arg-tRNA-synth_N_sf"/>
</dbReference>
<dbReference type="InterPro" id="IPR035684">
    <property type="entry name" value="ArgRS_core"/>
</dbReference>
<dbReference type="InterPro" id="IPR008909">
    <property type="entry name" value="DALR_anticod-bd"/>
</dbReference>
<dbReference type="InterPro" id="IPR014729">
    <property type="entry name" value="Rossmann-like_a/b/a_fold"/>
</dbReference>
<dbReference type="InterPro" id="IPR009080">
    <property type="entry name" value="tRNAsynth_Ia_anticodon-bd"/>
</dbReference>
<dbReference type="NCBIfam" id="TIGR00456">
    <property type="entry name" value="argS"/>
    <property type="match status" value="1"/>
</dbReference>
<dbReference type="PANTHER" id="PTHR11956:SF5">
    <property type="entry name" value="ARGININE--TRNA LIGASE, CYTOPLASMIC"/>
    <property type="match status" value="1"/>
</dbReference>
<dbReference type="PANTHER" id="PTHR11956">
    <property type="entry name" value="ARGINYL-TRNA SYNTHETASE"/>
    <property type="match status" value="1"/>
</dbReference>
<dbReference type="Pfam" id="PF03485">
    <property type="entry name" value="Arg_tRNA_synt_N"/>
    <property type="match status" value="1"/>
</dbReference>
<dbReference type="Pfam" id="PF05746">
    <property type="entry name" value="DALR_1"/>
    <property type="match status" value="1"/>
</dbReference>
<dbReference type="Pfam" id="PF00750">
    <property type="entry name" value="tRNA-synt_1d"/>
    <property type="match status" value="1"/>
</dbReference>
<dbReference type="PRINTS" id="PR01038">
    <property type="entry name" value="TRNASYNTHARG"/>
</dbReference>
<dbReference type="SMART" id="SM01016">
    <property type="entry name" value="Arg_tRNA_synt_N"/>
    <property type="match status" value="1"/>
</dbReference>
<dbReference type="SMART" id="SM00836">
    <property type="entry name" value="DALR_1"/>
    <property type="match status" value="1"/>
</dbReference>
<dbReference type="SUPFAM" id="SSF47323">
    <property type="entry name" value="Anticodon-binding domain of a subclass of class I aminoacyl-tRNA synthetases"/>
    <property type="match status" value="1"/>
</dbReference>
<dbReference type="SUPFAM" id="SSF55190">
    <property type="entry name" value="Arginyl-tRNA synthetase (ArgRS), N-terminal 'additional' domain"/>
    <property type="match status" value="1"/>
</dbReference>
<dbReference type="SUPFAM" id="SSF52374">
    <property type="entry name" value="Nucleotidylyl transferase"/>
    <property type="match status" value="1"/>
</dbReference>
<dbReference type="PROSITE" id="PS00178">
    <property type="entry name" value="AA_TRNA_LIGASE_I"/>
    <property type="match status" value="1"/>
</dbReference>
<comment type="catalytic activity">
    <reaction evidence="1">
        <text>tRNA(Arg) + L-arginine + ATP = L-arginyl-tRNA(Arg) + AMP + diphosphate</text>
        <dbReference type="Rhea" id="RHEA:20301"/>
        <dbReference type="Rhea" id="RHEA-COMP:9658"/>
        <dbReference type="Rhea" id="RHEA-COMP:9673"/>
        <dbReference type="ChEBI" id="CHEBI:30616"/>
        <dbReference type="ChEBI" id="CHEBI:32682"/>
        <dbReference type="ChEBI" id="CHEBI:33019"/>
        <dbReference type="ChEBI" id="CHEBI:78442"/>
        <dbReference type="ChEBI" id="CHEBI:78513"/>
        <dbReference type="ChEBI" id="CHEBI:456215"/>
        <dbReference type="EC" id="6.1.1.19"/>
    </reaction>
</comment>
<comment type="subunit">
    <text evidence="1">Monomer.</text>
</comment>
<comment type="subcellular location">
    <subcellularLocation>
        <location evidence="1">Cytoplasm</location>
    </subcellularLocation>
</comment>
<comment type="similarity">
    <text evidence="1">Belongs to the class-I aminoacyl-tRNA synthetase family.</text>
</comment>
<name>SYR_HELAH</name>
<proteinExistence type="inferred from homology"/>